<sequence length="15" mass="1643">LVSVSPAFNGNYFVE</sequence>
<comment type="function">
    <text evidence="3">Catalytic subunit of blood coagulation factor X-activating enzyme. Activates coagulation factor X (F10) in a calcium-dependent manner by cleaving at the '234-Arg-|-Ile-235' site. Weakly hydrolyzes insulin B chain (by cleaving at the '27-Asn-|-Gln-28' and '44-Gly-|-Glu-45' sites), fibrinogen and some components of the extracellular matrix in vitro.</text>
</comment>
<comment type="cofactor">
    <cofactor evidence="1">
        <name>Zn(2+)</name>
        <dbReference type="ChEBI" id="CHEBI:29105"/>
    </cofactor>
    <text evidence="1">Binds 1 zinc ion per subunit.</text>
</comment>
<comment type="subunit">
    <text>Heterotrimer; disulfide-linked. The heterotrimer consists of 1 heavy chain and 2 light chains (lectins): LC1 (AC P0C8J2) and LC2 (AC P0C8J3).</text>
</comment>
<comment type="subcellular location">
    <subcellularLocation>
        <location>Secreted</location>
    </subcellularLocation>
</comment>
<comment type="tissue specificity">
    <text>Expressed by the venom gland.</text>
</comment>
<comment type="PTM">
    <text>N-glycosylated.</text>
</comment>
<comment type="miscellaneous">
    <text>Negative results: does not activate prothrombin or plasminogen.</text>
</comment>
<comment type="similarity">
    <text evidence="4">Belongs to the venom metalloproteinase (M12B) family. P-III subfamily. P-IIId sub-subfamily.</text>
</comment>
<feature type="chain" id="PRO_0000355227" description="Factor X-activator 1 heavy chain">
    <location>
        <begin position="1"/>
        <end position="15" status="greater than"/>
    </location>
</feature>
<feature type="domain" description="Peptidase M12B" evidence="2">
    <location>
        <begin position="11"/>
        <end position="15" status="greater than"/>
    </location>
</feature>
<feature type="binding site" evidence="1">
    <location>
        <position position="11"/>
    </location>
    <ligand>
        <name>Ca(2+)</name>
        <dbReference type="ChEBI" id="CHEBI:29108"/>
    </ligand>
</feature>
<feature type="binding site" evidence="1">
    <location>
        <position position="13"/>
    </location>
    <ligand>
        <name>Ca(2+)</name>
        <dbReference type="ChEBI" id="CHEBI:29108"/>
    </ligand>
</feature>
<feature type="binding site" evidence="1">
    <location>
        <position position="15"/>
    </location>
    <ligand>
        <name>Ca(2+)</name>
        <dbReference type="ChEBI" id="CHEBI:29108"/>
    </ligand>
</feature>
<feature type="non-terminal residue">
    <location>
        <position position="15"/>
    </location>
</feature>
<reference key="1">
    <citation type="journal article" date="2008" name="Toxicon">
        <title>Two coagulation factor X activators from Vipera a. ammodytes venom with potential to treat patients with dysfunctional factors IXa or VIIa.</title>
        <authorList>
            <person name="Leonardi A."/>
            <person name="Fox J.W."/>
            <person name="Trampus-Bakija A."/>
            <person name="Krizaj I."/>
        </authorList>
    </citation>
    <scope>PROTEIN SEQUENCE</scope>
    <scope>FUNCTION</scope>
    <scope>CATALYTIC ACTIVITY</scope>
    <source>
        <tissue>Venom</tissue>
    </source>
</reference>
<dbReference type="EC" id="3.4.24.-"/>
<dbReference type="GO" id="GO:0005576">
    <property type="term" value="C:extracellular region"/>
    <property type="evidence" value="ECO:0007669"/>
    <property type="project" value="UniProtKB-SubCell"/>
</dbReference>
<dbReference type="GO" id="GO:0046872">
    <property type="term" value="F:metal ion binding"/>
    <property type="evidence" value="ECO:0007669"/>
    <property type="project" value="UniProtKB-KW"/>
</dbReference>
<dbReference type="GO" id="GO:0008237">
    <property type="term" value="F:metallopeptidase activity"/>
    <property type="evidence" value="ECO:0007669"/>
    <property type="project" value="UniProtKB-KW"/>
</dbReference>
<dbReference type="GO" id="GO:0090729">
    <property type="term" value="F:toxin activity"/>
    <property type="evidence" value="ECO:0007669"/>
    <property type="project" value="UniProtKB-KW"/>
</dbReference>
<dbReference type="GO" id="GO:0006508">
    <property type="term" value="P:proteolysis"/>
    <property type="evidence" value="ECO:0007669"/>
    <property type="project" value="UniProtKB-KW"/>
</dbReference>
<keyword id="KW-1204">Blood coagulation cascade activating toxin</keyword>
<keyword id="KW-0106">Calcium</keyword>
<keyword id="KW-0903">Direct protein sequencing</keyword>
<keyword id="KW-1015">Disulfide bond</keyword>
<keyword id="KW-0325">Glycoprotein</keyword>
<keyword id="KW-1199">Hemostasis impairing toxin</keyword>
<keyword id="KW-0378">Hydrolase</keyword>
<keyword id="KW-0479">Metal-binding</keyword>
<keyword id="KW-0482">Metalloprotease</keyword>
<keyword id="KW-0645">Protease</keyword>
<keyword id="KW-0964">Secreted</keyword>
<keyword id="KW-0800">Toxin</keyword>
<keyword id="KW-0862">Zinc</keyword>
<keyword id="KW-0865">Zymogen</keyword>
<evidence type="ECO:0000250" key="1"/>
<evidence type="ECO:0000255" key="2">
    <source>
        <dbReference type="PROSITE-ProRule" id="PRU00276"/>
    </source>
</evidence>
<evidence type="ECO:0000269" key="3">
    <source>
    </source>
</evidence>
<evidence type="ECO:0000305" key="4"/>
<name>VM3FA_VIPAA</name>
<protein>
    <recommendedName>
        <fullName>Factor X-activator 1 heavy chain</fullName>
        <shortName>VAFXA-I HC</shortName>
        <ecNumber>3.4.24.-</ecNumber>
    </recommendedName>
    <alternativeName>
        <fullName>Snake venom metalloproteinase</fullName>
        <shortName>SVMP</shortName>
    </alternativeName>
</protein>
<proteinExistence type="evidence at protein level"/>
<accession>P0C8I7</accession>
<organism>
    <name type="scientific">Vipera ammodytes ammodytes</name>
    <name type="common">Western sand viper</name>
    <dbReference type="NCBI Taxonomy" id="8705"/>
    <lineage>
        <taxon>Eukaryota</taxon>
        <taxon>Metazoa</taxon>
        <taxon>Chordata</taxon>
        <taxon>Craniata</taxon>
        <taxon>Vertebrata</taxon>
        <taxon>Euteleostomi</taxon>
        <taxon>Lepidosauria</taxon>
        <taxon>Squamata</taxon>
        <taxon>Bifurcata</taxon>
        <taxon>Unidentata</taxon>
        <taxon>Episquamata</taxon>
        <taxon>Toxicofera</taxon>
        <taxon>Serpentes</taxon>
        <taxon>Colubroidea</taxon>
        <taxon>Viperidae</taxon>
        <taxon>Viperinae</taxon>
        <taxon>Vipera</taxon>
    </lineage>
</organism>